<organism>
    <name type="scientific">Exiguobacterium sp. (strain ATCC BAA-1283 / AT1b)</name>
    <dbReference type="NCBI Taxonomy" id="360911"/>
    <lineage>
        <taxon>Bacteria</taxon>
        <taxon>Bacillati</taxon>
        <taxon>Bacillota</taxon>
        <taxon>Bacilli</taxon>
        <taxon>Bacillales</taxon>
        <taxon>Bacillales Family XII. Incertae Sedis</taxon>
        <taxon>Exiguobacterium</taxon>
    </lineage>
</organism>
<keyword id="KW-0028">Amino-acid biosynthesis</keyword>
<keyword id="KW-0456">Lyase</keyword>
<keyword id="KW-0479">Metal-binding</keyword>
<keyword id="KW-0486">Methionine biosynthesis</keyword>
<keyword id="KW-0862">Zinc</keyword>
<sequence length="205" mass="22570">MTVQERWVELADIKDELAARDWFPGTSGNLAIRVSDDPLTFLVTASGRDKRKRTNEDFVLVDATGQLIGEQSGKPSAETLLHVEIFNNTNATCSLHVHTVDNNVISELYAAQGHVTFTGQEIIKALGYWEETASVRIPIIENHADIPTLARAFAPHVTGDAGAVLIRNHGITVWGETPAAAKRYLEAYEFLFSYSLKLRALGVHS</sequence>
<evidence type="ECO:0000255" key="1">
    <source>
        <dbReference type="HAMAP-Rule" id="MF_01677"/>
    </source>
</evidence>
<dbReference type="EC" id="4.2.1.109" evidence="1"/>
<dbReference type="EMBL" id="CP001615">
    <property type="protein sequence ID" value="ACQ70365.1"/>
    <property type="molecule type" value="Genomic_DNA"/>
</dbReference>
<dbReference type="RefSeq" id="WP_012727484.1">
    <property type="nucleotide sequence ID" value="NC_012673.1"/>
</dbReference>
<dbReference type="SMR" id="C4KZ52"/>
<dbReference type="STRING" id="360911.EAT1b_1438"/>
<dbReference type="KEGG" id="eat:EAT1b_1438"/>
<dbReference type="eggNOG" id="COG0235">
    <property type="taxonomic scope" value="Bacteria"/>
</dbReference>
<dbReference type="HOGENOM" id="CLU_006033_4_1_9"/>
<dbReference type="OrthoDB" id="9805559at2"/>
<dbReference type="UniPathway" id="UPA00904">
    <property type="reaction ID" value="UER00875"/>
</dbReference>
<dbReference type="Proteomes" id="UP000000716">
    <property type="component" value="Chromosome"/>
</dbReference>
<dbReference type="GO" id="GO:0005737">
    <property type="term" value="C:cytoplasm"/>
    <property type="evidence" value="ECO:0007669"/>
    <property type="project" value="InterPro"/>
</dbReference>
<dbReference type="GO" id="GO:0046570">
    <property type="term" value="F:methylthioribulose 1-phosphate dehydratase activity"/>
    <property type="evidence" value="ECO:0007669"/>
    <property type="project" value="UniProtKB-UniRule"/>
</dbReference>
<dbReference type="GO" id="GO:0008270">
    <property type="term" value="F:zinc ion binding"/>
    <property type="evidence" value="ECO:0007669"/>
    <property type="project" value="UniProtKB-UniRule"/>
</dbReference>
<dbReference type="GO" id="GO:0019509">
    <property type="term" value="P:L-methionine salvage from methylthioadenosine"/>
    <property type="evidence" value="ECO:0007669"/>
    <property type="project" value="UniProtKB-UniRule"/>
</dbReference>
<dbReference type="Gene3D" id="3.40.225.10">
    <property type="entry name" value="Class II aldolase/adducin N-terminal domain"/>
    <property type="match status" value="1"/>
</dbReference>
<dbReference type="HAMAP" id="MF_01677">
    <property type="entry name" value="Salvage_MtnB"/>
    <property type="match status" value="1"/>
</dbReference>
<dbReference type="InterPro" id="IPR001303">
    <property type="entry name" value="Aldolase_II/adducin_N"/>
</dbReference>
<dbReference type="InterPro" id="IPR036409">
    <property type="entry name" value="Aldolase_II/adducin_N_sf"/>
</dbReference>
<dbReference type="InterPro" id="IPR017714">
    <property type="entry name" value="MethylthioRu-1-P_deHdtase_MtnB"/>
</dbReference>
<dbReference type="NCBIfam" id="NF005244">
    <property type="entry name" value="PRK06754.1"/>
    <property type="match status" value="1"/>
</dbReference>
<dbReference type="NCBIfam" id="TIGR03328">
    <property type="entry name" value="salvage_mtnB"/>
    <property type="match status" value="1"/>
</dbReference>
<dbReference type="PANTHER" id="PTHR10640">
    <property type="entry name" value="METHYLTHIORIBULOSE-1-PHOSPHATE DEHYDRATASE"/>
    <property type="match status" value="1"/>
</dbReference>
<dbReference type="PANTHER" id="PTHR10640:SF7">
    <property type="entry name" value="METHYLTHIORIBULOSE-1-PHOSPHATE DEHYDRATASE"/>
    <property type="match status" value="1"/>
</dbReference>
<dbReference type="Pfam" id="PF00596">
    <property type="entry name" value="Aldolase_II"/>
    <property type="match status" value="1"/>
</dbReference>
<dbReference type="SMART" id="SM01007">
    <property type="entry name" value="Aldolase_II"/>
    <property type="match status" value="1"/>
</dbReference>
<dbReference type="SUPFAM" id="SSF53639">
    <property type="entry name" value="AraD/HMP-PK domain-like"/>
    <property type="match status" value="1"/>
</dbReference>
<gene>
    <name evidence="1" type="primary">mtnB</name>
    <name type="ordered locus">EAT1b_1438</name>
</gene>
<reference key="1">
    <citation type="journal article" date="2011" name="J. Bacteriol.">
        <title>Complete genome sequence of the Thermophilic Bacterium Exiguobacterium sp. AT1b.</title>
        <authorList>
            <person name="Vishnivetskaya T.A."/>
            <person name="Lucas S."/>
            <person name="Copeland A."/>
            <person name="Lapidus A."/>
            <person name="Glavina del Rio T."/>
            <person name="Dalin E."/>
            <person name="Tice H."/>
            <person name="Bruce D.C."/>
            <person name="Goodwin L.A."/>
            <person name="Pitluck S."/>
            <person name="Saunders E."/>
            <person name="Brettin T."/>
            <person name="Detter C."/>
            <person name="Han C."/>
            <person name="Larimer F."/>
            <person name="Land M.L."/>
            <person name="Hauser L.J."/>
            <person name="Kyrpides N.C."/>
            <person name="Ovchinnikova G."/>
            <person name="Kathariou S."/>
            <person name="Ramaley R.F."/>
            <person name="Rodrigues D.F."/>
            <person name="Hendrix C."/>
            <person name="Richardson P."/>
            <person name="Tiedje J.M."/>
        </authorList>
    </citation>
    <scope>NUCLEOTIDE SEQUENCE [LARGE SCALE GENOMIC DNA]</scope>
    <source>
        <strain>ATCC BAA-1283 / AT1b</strain>
    </source>
</reference>
<proteinExistence type="inferred from homology"/>
<accession>C4KZ52</accession>
<protein>
    <recommendedName>
        <fullName evidence="1">Methylthioribulose-1-phosphate dehydratase</fullName>
        <shortName evidence="1">MTRu-1-P dehydratase</shortName>
        <ecNumber evidence="1">4.2.1.109</ecNumber>
    </recommendedName>
</protein>
<comment type="function">
    <text evidence="1">Catalyzes the dehydration of methylthioribulose-1-phosphate (MTRu-1-P) into 2,3-diketo-5-methylthiopentyl-1-phosphate (DK-MTP-1-P).</text>
</comment>
<comment type="catalytic activity">
    <reaction evidence="1">
        <text>5-(methylsulfanyl)-D-ribulose 1-phosphate = 5-methylsulfanyl-2,3-dioxopentyl phosphate + H2O</text>
        <dbReference type="Rhea" id="RHEA:15549"/>
        <dbReference type="ChEBI" id="CHEBI:15377"/>
        <dbReference type="ChEBI" id="CHEBI:58548"/>
        <dbReference type="ChEBI" id="CHEBI:58828"/>
        <dbReference type="EC" id="4.2.1.109"/>
    </reaction>
</comment>
<comment type="cofactor">
    <cofactor evidence="1">
        <name>Zn(2+)</name>
        <dbReference type="ChEBI" id="CHEBI:29105"/>
    </cofactor>
    <text evidence="1">Binds 1 zinc ion per subunit.</text>
</comment>
<comment type="pathway">
    <text evidence="1">Amino-acid biosynthesis; L-methionine biosynthesis via salvage pathway; L-methionine from S-methyl-5-thio-alpha-D-ribose 1-phosphate: step 2/6.</text>
</comment>
<comment type="similarity">
    <text evidence="1">Belongs to the aldolase class II family. MtnB subfamily.</text>
</comment>
<name>MTNB_EXISA</name>
<feature type="chain" id="PRO_1000215891" description="Methylthioribulose-1-phosphate dehydratase">
    <location>
        <begin position="1"/>
        <end position="205"/>
    </location>
</feature>
<feature type="binding site" evidence="1">
    <location>
        <position position="96"/>
    </location>
    <ligand>
        <name>Zn(2+)</name>
        <dbReference type="ChEBI" id="CHEBI:29105"/>
    </ligand>
</feature>
<feature type="binding site" evidence="1">
    <location>
        <position position="98"/>
    </location>
    <ligand>
        <name>Zn(2+)</name>
        <dbReference type="ChEBI" id="CHEBI:29105"/>
    </ligand>
</feature>